<sequence>MVDSVGFAEAWRAQFPDSEPPRMELRSVGDIEQELERCKASIRRLEQEVNQERFRMIYLQTLLAKEKKSYDRQRWGFRRAAQPPDGAAEPRASAPRLPPAPADGADPAPVEESEARPDGEGSPSKGRPATARRPAAAAPADRDDRGPPTSVAALRSNFEKIRKGPAQPGSADAEKPFYVNVEFHHERGLVKVNDKEVSDRISSLGSQAMQMERKKSQQSAGQGLGEAPRPHYRGRSSESSCGLDGDYEDAELNPRFLKDNLINANGGNRPPWPPLEYQPYQSIYVGGMMVEGEGKSPLLRSQSTSEQEKRLTWPRRSYSPRSFEDSGGGYTPDCSSNENLTSSEEDFSSGQSSRVSPSPTTYRMFRDKSRSPSQNSQQSFDSSSPPTPQCQKRHRQCQVVVSEATIVGVRKTGQIWPSDGDSTFQGEADSSFGTPPGYGCAADQAEEQRRHQDGLPYIDDSPSSSPHLSSKGRGSPASGALEPTKASELDLEKGLEMRKWVLSGILASEETYLSHLEALLLPMKPLKAAATTSQPVLTSQQIETIFFKVPELYEIHKEFYDGLFPRVQQWSHQQRVGDLFQKLASQLGVYRAFVDNYGVAMETAEKCCQANAQFAEISENLRARSNKDVKDSTTKNSLETLLYKPVDRVTRSTLVLHDLLKHTPSSHPDHSLLQDALRISQNFLSSINEEITPRRQSMTVKKGEHRQLLKDSFMVELVEGARKLRHIFLFTDLLLCTKLKKQSGGKTQQYDCKWYIPLTDLSFQMVDELEALPNIPLVPDEELDALKIKISQIKSDIQREKRANKGSKVMERLRKKLSEQESLLLLMSPSMAFRVHSRNGKSYTFLISSDYERAEWRESIREQQKKCFKSFSLTSVELQMLTNSCVKLQTVHHIPLTINKEDDESPGLYGFLHAIVHSATGFKQSSNLYCTLEVDSFGYFVNKAKTRVYRDTTEPNWNEEFEIELEGSQTLRILCYEKCYNKMKMAKEDGESADKLMGKGQVQLDPQTLQDRDWQRTVIDMNGIEVKLSVKFTSREFSLKRMPSRKQTGVFGVKIAVVTKRERSKVPYIVRQCVEEIERRGMEEVGIYRVSGVATDIQALKAAFDVNNKDVSVMMSEMDVNAIAGTLKLYFRELPEPLFTDEFYPNFAEGIALSDPVAKESCMLNLLLSLPEANLLTFLFLLDHLKRVAEKETVNKMSLHNLATVFGPTLLRPSEKESKLPANPSQPITMTDSWSLEVMSQVQVLLYFLQLEAIPAPDSKRQSILFSTEV</sequence>
<keyword id="KW-0067">ATP-binding</keyword>
<keyword id="KW-0966">Cell projection</keyword>
<keyword id="KW-0175">Coiled coil</keyword>
<keyword id="KW-0343">GTPase activation</keyword>
<keyword id="KW-0344">Guanine-nucleotide releasing factor</keyword>
<keyword id="KW-0418">Kinase</keyword>
<keyword id="KW-0488">Methylation</keyword>
<keyword id="KW-0547">Nucleotide-binding</keyword>
<keyword id="KW-0597">Phosphoprotein</keyword>
<keyword id="KW-1185">Reference proteome</keyword>
<keyword id="KW-0723">Serine/threonine-protein kinase</keyword>
<keyword id="KW-0770">Synapse</keyword>
<keyword id="KW-0808">Transferase</keyword>
<proteinExistence type="evidence at protein level"/>
<evidence type="ECO:0000250" key="1">
    <source>
        <dbReference type="UniProtKB" id="P11274"/>
    </source>
</evidence>
<evidence type="ECO:0000250" key="2">
    <source>
        <dbReference type="UniProtKB" id="Q6PAJ1"/>
    </source>
</evidence>
<evidence type="ECO:0000255" key="3"/>
<evidence type="ECO:0000255" key="4">
    <source>
        <dbReference type="PROSITE-ProRule" id="PRU00041"/>
    </source>
</evidence>
<evidence type="ECO:0000255" key="5">
    <source>
        <dbReference type="PROSITE-ProRule" id="PRU00062"/>
    </source>
</evidence>
<evidence type="ECO:0000255" key="6">
    <source>
        <dbReference type="PROSITE-ProRule" id="PRU00145"/>
    </source>
</evidence>
<evidence type="ECO:0000255" key="7">
    <source>
        <dbReference type="PROSITE-ProRule" id="PRU00172"/>
    </source>
</evidence>
<evidence type="ECO:0000256" key="8">
    <source>
        <dbReference type="SAM" id="MobiDB-lite"/>
    </source>
</evidence>
<evidence type="ECO:0000269" key="9">
    <source>
    </source>
</evidence>
<evidence type="ECO:0000305" key="10"/>
<evidence type="ECO:0000312" key="11">
    <source>
        <dbReference type="RGD" id="1307993"/>
    </source>
</evidence>
<evidence type="ECO:0007744" key="12">
    <source>
    </source>
</evidence>
<protein>
    <recommendedName>
        <fullName evidence="10">Breakpoint cluster region protein</fullName>
        <ecNumber evidence="1">2.7.11.1</ecNumber>
    </recommendedName>
</protein>
<name>BCR_RAT</name>
<comment type="function">
    <text evidence="1 2">Protein with a unique structure having two opposing regulatory activities toward small GTP-binding proteins. The C-terminus is a GTPase-activating protein (GAP) domain which stimulates GTP hydrolysis by RAC1, RAC2 and CDC42. Accelerates the intrinsic rate of GTP hydrolysis of RAC1 or CDC42, leading to down-regulation of the active GTP-bound form. The central Dbl homology (DH) domain functions as guanine nucleotide exchange factor (GEF) that modulates the GTPases CDC42, RHOA and RAC1. Promotes the conversion of CDC42, RHOA and RAC1 from the GDP-bound to the GTP-bound form. The amino terminus contains an intrinsic kinase activity (By similarity). Functions as an important negative regulator of neuronal RAC1 activity (By similarity). Regulates macrophage functions such as CSF1-directed motility and phagocytosis through the modulation of RAC1 activity. Plays a major role as a RHOA GEF in keratinocytes being involved in focal adhesion formation and keratinocyte differentiation (By similarity).</text>
</comment>
<comment type="catalytic activity">
    <reaction evidence="1">
        <text>L-seryl-[protein] + ATP = O-phospho-L-seryl-[protein] + ADP + H(+)</text>
        <dbReference type="Rhea" id="RHEA:17989"/>
        <dbReference type="Rhea" id="RHEA-COMP:9863"/>
        <dbReference type="Rhea" id="RHEA-COMP:11604"/>
        <dbReference type="ChEBI" id="CHEBI:15378"/>
        <dbReference type="ChEBI" id="CHEBI:29999"/>
        <dbReference type="ChEBI" id="CHEBI:30616"/>
        <dbReference type="ChEBI" id="CHEBI:83421"/>
        <dbReference type="ChEBI" id="CHEBI:456216"/>
        <dbReference type="EC" id="2.7.11.1"/>
    </reaction>
    <physiologicalReaction direction="left-to-right" evidence="10">
        <dbReference type="Rhea" id="RHEA:17990"/>
    </physiologicalReaction>
</comment>
<comment type="catalytic activity">
    <reaction evidence="1">
        <text>L-threonyl-[protein] + ATP = O-phospho-L-threonyl-[protein] + ADP + H(+)</text>
        <dbReference type="Rhea" id="RHEA:46608"/>
        <dbReference type="Rhea" id="RHEA-COMP:11060"/>
        <dbReference type="Rhea" id="RHEA-COMP:11605"/>
        <dbReference type="ChEBI" id="CHEBI:15378"/>
        <dbReference type="ChEBI" id="CHEBI:30013"/>
        <dbReference type="ChEBI" id="CHEBI:30616"/>
        <dbReference type="ChEBI" id="CHEBI:61977"/>
        <dbReference type="ChEBI" id="CHEBI:456216"/>
        <dbReference type="EC" id="2.7.11.1"/>
    </reaction>
    <physiologicalReaction direction="left-to-right" evidence="10">
        <dbReference type="Rhea" id="RHEA:46609"/>
    </physiologicalReaction>
</comment>
<comment type="subunit">
    <text evidence="1 2 9">Homotetramer. Interacts with PDZK1 (By similarity). May interact with CCPG1 (By similarity). Interacts with HCK, FES/FPS, ABL1, PIK3R1 and GRB2 (By similarity). Interacts with SH2D5 (By similarity). Interacts with DLG4 (PubMed:20962234).</text>
</comment>
<comment type="subcellular location">
    <subcellularLocation>
        <location evidence="2">Postsynaptic density</location>
    </subcellularLocation>
    <subcellularLocation>
        <location evidence="2">Cell projection</location>
        <location evidence="2">Dendritic spine</location>
    </subcellularLocation>
    <subcellularLocation>
        <location evidence="2">Cell projection</location>
        <location evidence="2">Axon</location>
    </subcellularLocation>
    <subcellularLocation>
        <location evidence="9">Synapse</location>
    </subcellularLocation>
</comment>
<comment type="tissue specificity">
    <text evidence="9">Expressed in brain, including the cortex, hippocampus, cerebellum, and brainstem, as well as the spinal cord (at protein level).</text>
</comment>
<comment type="developmental stage">
    <text evidence="9">Expression is initially high at a late embryonic (18 dpc) stage and maintained at slightly decreased levels throughout postnatal brain development.</text>
</comment>
<comment type="domain">
    <text evidence="1">The region involved in binding to ABL1 SH2-domain is rich in serine residues and needs to be Ser/Thr phosphorylated prior to SH2 binding. This region is essential for the activation of the ABL1 tyrosine kinase and transforming potential of the chimeric BCR-ABL oncogene.</text>
</comment>
<comment type="domain">
    <text evidence="2">The DH domain is involved in interaction with CCPG1.</text>
</comment>
<comment type="domain">
    <text evidence="1">The amino terminus contains an intrinsic kinase activity. The central Dbl homology (DH) domain functions as a guanine nucleotide exchange factor (GEF) that modulates the GTPases CDC42, RHOA and RAC1. Promotes the conversion of CDC42, RHOA and RAC1 from the GDP-bound to the GTP-bound form. The C-terminus is a Rho-GAP domain which stimulates GTP hydrolysis by RAC1, RAC2 and CDC42. The protein has a unique structure having two opposing regulatory activities toward small GTP-binding proteins.</text>
</comment>
<comment type="PTM">
    <text evidence="1">Autophosphorylated. Phosphorylated by FES/FPS on tyrosine residues, leading to down-regulation of the BCR kinase activity. Phosphorylation by HCK is important for interaction with GRB2.</text>
</comment>
<feature type="chain" id="PRO_0000447439" description="Breakpoint cluster region protein">
    <location>
        <begin position="1"/>
        <end position="1270"/>
    </location>
</feature>
<feature type="domain" description="DH" evidence="5">
    <location>
        <begin position="497"/>
        <end position="690"/>
    </location>
</feature>
<feature type="domain" description="PH" evidence="6">
    <location>
        <begin position="707"/>
        <end position="865"/>
    </location>
</feature>
<feature type="domain" description="C2" evidence="4">
    <location>
        <begin position="892"/>
        <end position="1019"/>
    </location>
</feature>
<feature type="domain" description="Rho-GAP" evidence="7">
    <location>
        <begin position="1053"/>
        <end position="1247"/>
    </location>
</feature>
<feature type="region of interest" description="Disordered" evidence="8">
    <location>
        <begin position="67"/>
        <end position="173"/>
    </location>
</feature>
<feature type="region of interest" description="Disordered" evidence="8">
    <location>
        <begin position="201"/>
        <end position="249"/>
    </location>
</feature>
<feature type="region of interest" description="Disordered" evidence="8">
    <location>
        <begin position="295"/>
        <end position="396"/>
    </location>
</feature>
<feature type="region of interest" description="Disordered" evidence="8">
    <location>
        <begin position="412"/>
        <end position="484"/>
    </location>
</feature>
<feature type="coiled-coil region" evidence="3">
    <location>
        <begin position="28"/>
        <end position="55"/>
    </location>
</feature>
<feature type="compositionally biased region" description="Low complexity" evidence="8">
    <location>
        <begin position="126"/>
        <end position="139"/>
    </location>
</feature>
<feature type="compositionally biased region" description="Low complexity" evidence="8">
    <location>
        <begin position="348"/>
        <end position="358"/>
    </location>
</feature>
<feature type="compositionally biased region" description="Low complexity" evidence="8">
    <location>
        <begin position="371"/>
        <end position="384"/>
    </location>
</feature>
<feature type="site" description="Arginine finger; crucial for GTP hydrolysis by stabilizing the transition state" evidence="7">
    <location>
        <position position="1089"/>
    </location>
</feature>
<feature type="modified residue" description="Phosphoserine" evidence="1">
    <location>
        <position position="216"/>
    </location>
</feature>
<feature type="modified residue" description="Phosphoserine" evidence="2">
    <location>
        <position position="237"/>
    </location>
</feature>
<feature type="modified residue" description="Phosphotyrosine" evidence="1">
    <location>
        <position position="247"/>
    </location>
</feature>
<feature type="modified residue" description="Phosphoserine" evidence="1">
    <location>
        <position position="358"/>
    </location>
</feature>
<feature type="modified residue" description="Phosphoserine" evidence="1">
    <location>
        <position position="379"/>
    </location>
</feature>
<feature type="modified residue" description="Phosphoserine" evidence="2">
    <location>
        <position position="384"/>
    </location>
</feature>
<feature type="modified residue" description="Phosphothreonine" evidence="2">
    <location>
        <position position="387"/>
    </location>
</feature>
<feature type="modified residue" description="Phosphoserine" evidence="1">
    <location>
        <position position="461"/>
    </location>
</feature>
<feature type="modified residue" description="Phosphoserine" evidence="1">
    <location>
        <position position="465"/>
    </location>
</feature>
<feature type="modified residue" description="Omega-N-methylarginine" evidence="2">
    <location>
        <position position="473"/>
    </location>
</feature>
<feature type="modified residue" description="Phosphoserine" evidence="1">
    <location>
        <position position="475"/>
    </location>
</feature>
<feature type="modified residue" description="Phosphoserine" evidence="1">
    <location>
        <position position="487"/>
    </location>
</feature>
<feature type="modified residue" description="Phosphotyrosine" evidence="1">
    <location>
        <position position="553"/>
    </location>
</feature>
<feature type="modified residue" description="Phosphothreonine" evidence="1">
    <location>
        <position position="640"/>
    </location>
</feature>
<feature type="modified residue" description="Phosphotyrosine" evidence="1">
    <location>
        <position position="643"/>
    </location>
</feature>
<feature type="modified residue" description="Phosphothreonine" evidence="1">
    <location>
        <position position="692"/>
    </location>
</feature>
<feature type="modified residue" description="Phosphoserine" evidence="1">
    <location>
        <position position="1263"/>
    </location>
</feature>
<reference key="1">
    <citation type="journal article" date="2004" name="Nature">
        <title>Genome sequence of the Brown Norway rat yields insights into mammalian evolution.</title>
        <authorList>
            <person name="Gibbs R.A."/>
            <person name="Weinstock G.M."/>
            <person name="Metzker M.L."/>
            <person name="Muzny D.M."/>
            <person name="Sodergren E.J."/>
            <person name="Scherer S."/>
            <person name="Scott G."/>
            <person name="Steffen D."/>
            <person name="Worley K.C."/>
            <person name="Burch P.E."/>
            <person name="Okwuonu G."/>
            <person name="Hines S."/>
            <person name="Lewis L."/>
            <person name="Deramo C."/>
            <person name="Delgado O."/>
            <person name="Dugan-Rocha S."/>
            <person name="Miner G."/>
            <person name="Morgan M."/>
            <person name="Hawes A."/>
            <person name="Gill R."/>
            <person name="Holt R.A."/>
            <person name="Adams M.D."/>
            <person name="Amanatides P.G."/>
            <person name="Baden-Tillson H."/>
            <person name="Barnstead M."/>
            <person name="Chin S."/>
            <person name="Evans C.A."/>
            <person name="Ferriera S."/>
            <person name="Fosler C."/>
            <person name="Glodek A."/>
            <person name="Gu Z."/>
            <person name="Jennings D."/>
            <person name="Kraft C.L."/>
            <person name="Nguyen T."/>
            <person name="Pfannkoch C.M."/>
            <person name="Sitter C."/>
            <person name="Sutton G.G."/>
            <person name="Venter J.C."/>
            <person name="Woodage T."/>
            <person name="Smith D."/>
            <person name="Lee H.-M."/>
            <person name="Gustafson E."/>
            <person name="Cahill P."/>
            <person name="Kana A."/>
            <person name="Doucette-Stamm L."/>
            <person name="Weinstock K."/>
            <person name="Fechtel K."/>
            <person name="Weiss R.B."/>
            <person name="Dunn D.M."/>
            <person name="Green E.D."/>
            <person name="Blakesley R.W."/>
            <person name="Bouffard G.G."/>
            <person name="De Jong P.J."/>
            <person name="Osoegawa K."/>
            <person name="Zhu B."/>
            <person name="Marra M."/>
            <person name="Schein J."/>
            <person name="Bosdet I."/>
            <person name="Fjell C."/>
            <person name="Jones S."/>
            <person name="Krzywinski M."/>
            <person name="Mathewson C."/>
            <person name="Siddiqui A."/>
            <person name="Wye N."/>
            <person name="McPherson J."/>
            <person name="Zhao S."/>
            <person name="Fraser C.M."/>
            <person name="Shetty J."/>
            <person name="Shatsman S."/>
            <person name="Geer K."/>
            <person name="Chen Y."/>
            <person name="Abramzon S."/>
            <person name="Nierman W.C."/>
            <person name="Havlak P.H."/>
            <person name="Chen R."/>
            <person name="Durbin K.J."/>
            <person name="Egan A."/>
            <person name="Ren Y."/>
            <person name="Song X.-Z."/>
            <person name="Li B."/>
            <person name="Liu Y."/>
            <person name="Qin X."/>
            <person name="Cawley S."/>
            <person name="Cooney A.J."/>
            <person name="D'Souza L.M."/>
            <person name="Martin K."/>
            <person name="Wu J.Q."/>
            <person name="Gonzalez-Garay M.L."/>
            <person name="Jackson A.R."/>
            <person name="Kalafus K.J."/>
            <person name="McLeod M.P."/>
            <person name="Milosavljevic A."/>
            <person name="Virk D."/>
            <person name="Volkov A."/>
            <person name="Wheeler D.A."/>
            <person name="Zhang Z."/>
            <person name="Bailey J.A."/>
            <person name="Eichler E.E."/>
            <person name="Tuzun E."/>
            <person name="Birney E."/>
            <person name="Mongin E."/>
            <person name="Ureta-Vidal A."/>
            <person name="Woodwark C."/>
            <person name="Zdobnov E."/>
            <person name="Bork P."/>
            <person name="Suyama M."/>
            <person name="Torrents D."/>
            <person name="Alexandersson M."/>
            <person name="Trask B.J."/>
            <person name="Young J.M."/>
            <person name="Huang H."/>
            <person name="Wang H."/>
            <person name="Xing H."/>
            <person name="Daniels S."/>
            <person name="Gietzen D."/>
            <person name="Schmidt J."/>
            <person name="Stevens K."/>
            <person name="Vitt U."/>
            <person name="Wingrove J."/>
            <person name="Camara F."/>
            <person name="Mar Alba M."/>
            <person name="Abril J.F."/>
            <person name="Guigo R."/>
            <person name="Smit A."/>
            <person name="Dubchak I."/>
            <person name="Rubin E.M."/>
            <person name="Couronne O."/>
            <person name="Poliakov A."/>
            <person name="Huebner N."/>
            <person name="Ganten D."/>
            <person name="Goesele C."/>
            <person name="Hummel O."/>
            <person name="Kreitler T."/>
            <person name="Lee Y.-A."/>
            <person name="Monti J."/>
            <person name="Schulz H."/>
            <person name="Zimdahl H."/>
            <person name="Himmelbauer H."/>
            <person name="Lehrach H."/>
            <person name="Jacob H.J."/>
            <person name="Bromberg S."/>
            <person name="Gullings-Handley J."/>
            <person name="Jensen-Seaman M.I."/>
            <person name="Kwitek A.E."/>
            <person name="Lazar J."/>
            <person name="Pasko D."/>
            <person name="Tonellato P.J."/>
            <person name="Twigger S."/>
            <person name="Ponting C.P."/>
            <person name="Duarte J.M."/>
            <person name="Rice S."/>
            <person name="Goodstadt L."/>
            <person name="Beatson S.A."/>
            <person name="Emes R.D."/>
            <person name="Winter E.E."/>
            <person name="Webber C."/>
            <person name="Brandt P."/>
            <person name="Nyakatura G."/>
            <person name="Adetobi M."/>
            <person name="Chiaromonte F."/>
            <person name="Elnitski L."/>
            <person name="Eswara P."/>
            <person name="Hardison R.C."/>
            <person name="Hou M."/>
            <person name="Kolbe D."/>
            <person name="Makova K."/>
            <person name="Miller W."/>
            <person name="Nekrutenko A."/>
            <person name="Riemer C."/>
            <person name="Schwartz S."/>
            <person name="Taylor J."/>
            <person name="Yang S."/>
            <person name="Zhang Y."/>
            <person name="Lindpaintner K."/>
            <person name="Andrews T.D."/>
            <person name="Caccamo M."/>
            <person name="Clamp M."/>
            <person name="Clarke L."/>
            <person name="Curwen V."/>
            <person name="Durbin R.M."/>
            <person name="Eyras E."/>
            <person name="Searle S.M."/>
            <person name="Cooper G.M."/>
            <person name="Batzoglou S."/>
            <person name="Brudno M."/>
            <person name="Sidow A."/>
            <person name="Stone E.A."/>
            <person name="Payseur B.A."/>
            <person name="Bourque G."/>
            <person name="Lopez-Otin C."/>
            <person name="Puente X.S."/>
            <person name="Chakrabarti K."/>
            <person name="Chatterji S."/>
            <person name="Dewey C."/>
            <person name="Pachter L."/>
            <person name="Bray N."/>
            <person name="Yap V.B."/>
            <person name="Caspi A."/>
            <person name="Tesler G."/>
            <person name="Pevzner P.A."/>
            <person name="Haussler D."/>
            <person name="Roskin K.M."/>
            <person name="Baertsch R."/>
            <person name="Clawson H."/>
            <person name="Furey T.S."/>
            <person name="Hinrichs A.S."/>
            <person name="Karolchik D."/>
            <person name="Kent W.J."/>
            <person name="Rosenbloom K.R."/>
            <person name="Trumbower H."/>
            <person name="Weirauch M."/>
            <person name="Cooper D.N."/>
            <person name="Stenson P.D."/>
            <person name="Ma B."/>
            <person name="Brent M."/>
            <person name="Arumugam M."/>
            <person name="Shteynberg D."/>
            <person name="Copley R.R."/>
            <person name="Taylor M.S."/>
            <person name="Riethman H."/>
            <person name="Mudunuri U."/>
            <person name="Peterson J."/>
            <person name="Guyer M."/>
            <person name="Felsenfeld A."/>
            <person name="Old S."/>
            <person name="Mockrin S."/>
            <person name="Collins F.S."/>
        </authorList>
    </citation>
    <scope>NUCLEOTIDE SEQUENCE [LARGE SCALE GENOMIC DNA]</scope>
    <source>
        <strain>Brown Norway</strain>
    </source>
</reference>
<reference key="2">
    <citation type="journal article" date="2010" name="J. Neurosci.">
        <title>Regulation of synaptic Rac1 activity, long-term potentiation maintenance, and learning and memory by BCR and ABR Rac GTPase-activating proteins.</title>
        <authorList>
            <person name="Oh D."/>
            <person name="Han S."/>
            <person name="Seo J."/>
            <person name="Lee J.R."/>
            <person name="Choi J."/>
            <person name="Groffen J."/>
            <person name="Kim K."/>
            <person name="Cho Y.S."/>
            <person name="Choi H.S."/>
            <person name="Shin H."/>
            <person name="Woo J."/>
            <person name="Won H."/>
            <person name="Park S.K."/>
            <person name="Kim S.Y."/>
            <person name="Jo J."/>
            <person name="Whitcomb D.J."/>
            <person name="Cho K."/>
            <person name="Kim H."/>
            <person name="Bae Y.C."/>
            <person name="Heisterkamp N."/>
            <person name="Choi S.Y."/>
            <person name="Kim E."/>
        </authorList>
    </citation>
    <scope>INTERACTION WITH DLG4</scope>
    <scope>TISSUE SPECIFICITY</scope>
    <scope>SUBCELLULAR LOCATION</scope>
    <scope>DEVELOPMENTAL STAGE</scope>
</reference>
<reference evidence="12" key="3">
    <citation type="journal article" date="2012" name="Nat. Commun.">
        <title>Quantitative maps of protein phosphorylation sites across 14 different rat organs and tissues.</title>
        <authorList>
            <person name="Lundby A."/>
            <person name="Secher A."/>
            <person name="Lage K."/>
            <person name="Nordsborg N.B."/>
            <person name="Dmytriyev A."/>
            <person name="Lundby C."/>
            <person name="Olsen J.V."/>
        </authorList>
    </citation>
    <scope>IDENTIFICATION BY MASS SPECTROMETRY [LARGE SCALE ANALYSIS]</scope>
</reference>
<gene>
    <name evidence="11" type="primary">Bcr</name>
</gene>
<accession>F1LXF1</accession>
<organism>
    <name type="scientific">Rattus norvegicus</name>
    <name type="common">Rat</name>
    <dbReference type="NCBI Taxonomy" id="10116"/>
    <lineage>
        <taxon>Eukaryota</taxon>
        <taxon>Metazoa</taxon>
        <taxon>Chordata</taxon>
        <taxon>Craniata</taxon>
        <taxon>Vertebrata</taxon>
        <taxon>Euteleostomi</taxon>
        <taxon>Mammalia</taxon>
        <taxon>Eutheria</taxon>
        <taxon>Euarchontoglires</taxon>
        <taxon>Glires</taxon>
        <taxon>Rodentia</taxon>
        <taxon>Myomorpha</taxon>
        <taxon>Muroidea</taxon>
        <taxon>Muridae</taxon>
        <taxon>Murinae</taxon>
        <taxon>Rattus</taxon>
    </lineage>
</organism>
<dbReference type="EC" id="2.7.11.1" evidence="1"/>
<dbReference type="EMBL" id="AABR07044649">
    <property type="status" value="NOT_ANNOTATED_CDS"/>
    <property type="molecule type" value="Genomic_DNA"/>
</dbReference>
<dbReference type="EMBL" id="AABR07044650">
    <property type="status" value="NOT_ANNOTATED_CDS"/>
    <property type="molecule type" value="Genomic_DNA"/>
</dbReference>
<dbReference type="RefSeq" id="NP_001406538.1">
    <property type="nucleotide sequence ID" value="NM_001419609.2"/>
</dbReference>
<dbReference type="SMR" id="F1LXF1"/>
<dbReference type="FunCoup" id="F1LXF1">
    <property type="interactions" value="3235"/>
</dbReference>
<dbReference type="STRING" id="10116.ENSRNOP00000001766"/>
<dbReference type="PhosphoSitePlus" id="F1LXF1"/>
<dbReference type="jPOST" id="F1LXF1"/>
<dbReference type="PaxDb" id="10116-ENSRNOP00000001766"/>
<dbReference type="PeptideAtlas" id="F1LXF1"/>
<dbReference type="Ensembl" id="ENSRNOT00000001766.8">
    <property type="protein sequence ID" value="ENSRNOP00000001766.7"/>
    <property type="gene ID" value="ENSRNOG00000001304.8"/>
</dbReference>
<dbReference type="GeneID" id="309696"/>
<dbReference type="AGR" id="RGD:1307993"/>
<dbReference type="RGD" id="1307993">
    <property type="gene designation" value="Bcr"/>
</dbReference>
<dbReference type="VEuPathDB" id="HostDB:ENSRNOG00000001304"/>
<dbReference type="eggNOG" id="KOG4269">
    <property type="taxonomic scope" value="Eukaryota"/>
</dbReference>
<dbReference type="GeneTree" id="ENSGT00940000153491"/>
<dbReference type="HOGENOM" id="CLU_004164_0_0_1"/>
<dbReference type="InParanoid" id="F1LXF1"/>
<dbReference type="OMA" id="HDLMPFI"/>
<dbReference type="TreeFam" id="TF105082"/>
<dbReference type="Reactome" id="R-RNO-8980692">
    <property type="pathway name" value="RHOA GTPase cycle"/>
</dbReference>
<dbReference type="Reactome" id="R-RNO-9013026">
    <property type="pathway name" value="RHOB GTPase cycle"/>
</dbReference>
<dbReference type="Reactome" id="R-RNO-9013148">
    <property type="pathway name" value="CDC42 GTPase cycle"/>
</dbReference>
<dbReference type="Reactome" id="R-RNO-9013149">
    <property type="pathway name" value="RAC1 GTPase cycle"/>
</dbReference>
<dbReference type="Reactome" id="R-RNO-9013404">
    <property type="pathway name" value="RAC2 GTPase cycle"/>
</dbReference>
<dbReference type="PRO" id="PR:F1LXF1"/>
<dbReference type="Proteomes" id="UP000002494">
    <property type="component" value="Chromosome 20"/>
</dbReference>
<dbReference type="Bgee" id="ENSRNOG00000001304">
    <property type="expression patterns" value="Expressed in frontal cortex and 19 other cell types or tissues"/>
</dbReference>
<dbReference type="GO" id="GO:0030424">
    <property type="term" value="C:axon"/>
    <property type="evidence" value="ECO:0007669"/>
    <property type="project" value="UniProtKB-SubCell"/>
</dbReference>
<dbReference type="GO" id="GO:0005829">
    <property type="term" value="C:cytosol"/>
    <property type="evidence" value="ECO:0000266"/>
    <property type="project" value="RGD"/>
</dbReference>
<dbReference type="GO" id="GO:0043197">
    <property type="term" value="C:dendritic spine"/>
    <property type="evidence" value="ECO:0007669"/>
    <property type="project" value="UniProtKB-SubCell"/>
</dbReference>
<dbReference type="GO" id="GO:0098978">
    <property type="term" value="C:glutamatergic synapse"/>
    <property type="evidence" value="ECO:0000314"/>
    <property type="project" value="SynGO"/>
</dbReference>
<dbReference type="GO" id="GO:0016020">
    <property type="term" value="C:membrane"/>
    <property type="evidence" value="ECO:0000318"/>
    <property type="project" value="GO_Central"/>
</dbReference>
<dbReference type="GO" id="GO:0005886">
    <property type="term" value="C:plasma membrane"/>
    <property type="evidence" value="ECO:0000266"/>
    <property type="project" value="RGD"/>
</dbReference>
<dbReference type="GO" id="GO:0014069">
    <property type="term" value="C:postsynaptic density"/>
    <property type="evidence" value="ECO:0000266"/>
    <property type="project" value="RGD"/>
</dbReference>
<dbReference type="GO" id="GO:0099092">
    <property type="term" value="C:postsynaptic density, intracellular component"/>
    <property type="evidence" value="ECO:0000314"/>
    <property type="project" value="SynGO"/>
</dbReference>
<dbReference type="GO" id="GO:0032991">
    <property type="term" value="C:protein-containing complex"/>
    <property type="evidence" value="ECO:0000266"/>
    <property type="project" value="RGD"/>
</dbReference>
<dbReference type="GO" id="GO:0098685">
    <property type="term" value="C:Schaffer collateral - CA1 synapse"/>
    <property type="evidence" value="ECO:0000250"/>
    <property type="project" value="UniProtKB"/>
</dbReference>
<dbReference type="GO" id="GO:0005524">
    <property type="term" value="F:ATP binding"/>
    <property type="evidence" value="ECO:0007669"/>
    <property type="project" value="UniProtKB-KW"/>
</dbReference>
<dbReference type="GO" id="GO:0019899">
    <property type="term" value="F:enzyme binding"/>
    <property type="evidence" value="ECO:0000353"/>
    <property type="project" value="RGD"/>
</dbReference>
<dbReference type="GO" id="GO:0005096">
    <property type="term" value="F:GTPase activator activity"/>
    <property type="evidence" value="ECO:0000266"/>
    <property type="project" value="RGD"/>
</dbReference>
<dbReference type="GO" id="GO:0005085">
    <property type="term" value="F:guanyl-nucleotide exchange factor activity"/>
    <property type="evidence" value="ECO:0000266"/>
    <property type="project" value="RGD"/>
</dbReference>
<dbReference type="GO" id="GO:0106310">
    <property type="term" value="F:protein serine kinase activity"/>
    <property type="evidence" value="ECO:0007669"/>
    <property type="project" value="RHEA"/>
</dbReference>
<dbReference type="GO" id="GO:0004674">
    <property type="term" value="F:protein serine/threonine kinase activity"/>
    <property type="evidence" value="ECO:0007669"/>
    <property type="project" value="UniProtKB-KW"/>
</dbReference>
<dbReference type="GO" id="GO:0030036">
    <property type="term" value="P:actin cytoskeleton organization"/>
    <property type="evidence" value="ECO:0000266"/>
    <property type="project" value="RGD"/>
</dbReference>
<dbReference type="GO" id="GO:0007420">
    <property type="term" value="P:brain development"/>
    <property type="evidence" value="ECO:0000266"/>
    <property type="project" value="RGD"/>
</dbReference>
<dbReference type="GO" id="GO:0016477">
    <property type="term" value="P:cell migration"/>
    <property type="evidence" value="ECO:0000266"/>
    <property type="project" value="RGD"/>
</dbReference>
<dbReference type="GO" id="GO:0071222">
    <property type="term" value="P:cellular response to lipopolysaccharide"/>
    <property type="evidence" value="ECO:0000266"/>
    <property type="project" value="RGD"/>
</dbReference>
<dbReference type="GO" id="GO:0060216">
    <property type="term" value="P:definitive hemopoiesis"/>
    <property type="evidence" value="ECO:0000266"/>
    <property type="project" value="RGD"/>
</dbReference>
<dbReference type="GO" id="GO:0051649">
    <property type="term" value="P:establishment of localization in cell"/>
    <property type="evidence" value="ECO:0000266"/>
    <property type="project" value="RGD"/>
</dbReference>
<dbReference type="GO" id="GO:0048041">
    <property type="term" value="P:focal adhesion assembly"/>
    <property type="evidence" value="ECO:0000266"/>
    <property type="project" value="RGD"/>
</dbReference>
<dbReference type="GO" id="GO:0048872">
    <property type="term" value="P:homeostasis of number of cells"/>
    <property type="evidence" value="ECO:0000266"/>
    <property type="project" value="RGD"/>
</dbReference>
<dbReference type="GO" id="GO:0042472">
    <property type="term" value="P:inner ear morphogenesis"/>
    <property type="evidence" value="ECO:0000266"/>
    <property type="project" value="RGD"/>
</dbReference>
<dbReference type="GO" id="GO:0065002">
    <property type="term" value="P:intracellular protein transmembrane transport"/>
    <property type="evidence" value="ECO:0000266"/>
    <property type="project" value="RGD"/>
</dbReference>
<dbReference type="GO" id="GO:0030216">
    <property type="term" value="P:keratinocyte differentiation"/>
    <property type="evidence" value="ECO:0000266"/>
    <property type="project" value="RGD"/>
</dbReference>
<dbReference type="GO" id="GO:1905517">
    <property type="term" value="P:macrophage migration"/>
    <property type="evidence" value="ECO:0000266"/>
    <property type="project" value="RGD"/>
</dbReference>
<dbReference type="GO" id="GO:0050804">
    <property type="term" value="P:modulation of chemical synaptic transmission"/>
    <property type="evidence" value="ECO:0000250"/>
    <property type="project" value="UniProtKB"/>
</dbReference>
<dbReference type="GO" id="GO:0060313">
    <property type="term" value="P:negative regulation of blood vessel remodeling"/>
    <property type="evidence" value="ECO:0000266"/>
    <property type="project" value="RGD"/>
</dbReference>
<dbReference type="GO" id="GO:0002692">
    <property type="term" value="P:negative regulation of cellular extravasation"/>
    <property type="evidence" value="ECO:0000266"/>
    <property type="project" value="RGD"/>
</dbReference>
<dbReference type="GO" id="GO:0050728">
    <property type="term" value="P:negative regulation of inflammatory response"/>
    <property type="evidence" value="ECO:0000266"/>
    <property type="project" value="RGD"/>
</dbReference>
<dbReference type="GO" id="GO:1905522">
    <property type="term" value="P:negative regulation of macrophage migration"/>
    <property type="evidence" value="ECO:0000266"/>
    <property type="project" value="RGD"/>
</dbReference>
<dbReference type="GO" id="GO:0043314">
    <property type="term" value="P:negative regulation of neutrophil degranulation"/>
    <property type="evidence" value="ECO:0000266"/>
    <property type="project" value="RGD"/>
</dbReference>
<dbReference type="GO" id="GO:2000378">
    <property type="term" value="P:negative regulation of reactive oxygen species metabolic process"/>
    <property type="evidence" value="ECO:0000266"/>
    <property type="project" value="RGD"/>
</dbReference>
<dbReference type="GO" id="GO:0060268">
    <property type="term" value="P:negative regulation of respiratory burst"/>
    <property type="evidence" value="ECO:0000266"/>
    <property type="project" value="RGD"/>
</dbReference>
<dbReference type="GO" id="GO:0050885">
    <property type="term" value="P:neuromuscular process controlling balance"/>
    <property type="evidence" value="ECO:0000266"/>
    <property type="project" value="RGD"/>
</dbReference>
<dbReference type="GO" id="GO:0043312">
    <property type="term" value="P:neutrophil degranulation"/>
    <property type="evidence" value="ECO:0000266"/>
    <property type="project" value="RGD"/>
</dbReference>
<dbReference type="GO" id="GO:0006909">
    <property type="term" value="P:phagocytosis"/>
    <property type="evidence" value="ECO:0000266"/>
    <property type="project" value="RGD"/>
</dbReference>
<dbReference type="GO" id="GO:0048008">
    <property type="term" value="P:platelet-derived growth factor receptor signaling pathway"/>
    <property type="evidence" value="ECO:0000314"/>
    <property type="project" value="RGD"/>
</dbReference>
<dbReference type="GO" id="GO:0050766">
    <property type="term" value="P:positive regulation of phagocytosis"/>
    <property type="evidence" value="ECO:0000266"/>
    <property type="project" value="RGD"/>
</dbReference>
<dbReference type="GO" id="GO:0051726">
    <property type="term" value="P:regulation of cell cycle"/>
    <property type="evidence" value="ECO:0000266"/>
    <property type="project" value="RGD"/>
</dbReference>
<dbReference type="GO" id="GO:0035023">
    <property type="term" value="P:regulation of Rho protein signal transduction"/>
    <property type="evidence" value="ECO:0000266"/>
    <property type="project" value="RGD"/>
</dbReference>
<dbReference type="GO" id="GO:0043114">
    <property type="term" value="P:regulation of vascular permeability"/>
    <property type="evidence" value="ECO:0000266"/>
    <property type="project" value="RGD"/>
</dbReference>
<dbReference type="GO" id="GO:0003014">
    <property type="term" value="P:renal system process"/>
    <property type="evidence" value="ECO:0000266"/>
    <property type="project" value="RGD"/>
</dbReference>
<dbReference type="GO" id="GO:0032496">
    <property type="term" value="P:response to lipopolysaccharide"/>
    <property type="evidence" value="ECO:0000266"/>
    <property type="project" value="RGD"/>
</dbReference>
<dbReference type="GO" id="GO:0007264">
    <property type="term" value="P:small GTPase-mediated signal transduction"/>
    <property type="evidence" value="ECO:0000266"/>
    <property type="project" value="RGD"/>
</dbReference>
<dbReference type="CDD" id="cd08686">
    <property type="entry name" value="C2_ABR"/>
    <property type="match status" value="1"/>
</dbReference>
<dbReference type="CDD" id="cd04387">
    <property type="entry name" value="RhoGAP_Bcr"/>
    <property type="match status" value="1"/>
</dbReference>
<dbReference type="CDD" id="cd00160">
    <property type="entry name" value="RhoGEF"/>
    <property type="match status" value="1"/>
</dbReference>
<dbReference type="FunFam" id="2.60.40.150:FF:000057">
    <property type="entry name" value="active breakpoint cluster region-related protein isoform X1"/>
    <property type="match status" value="1"/>
</dbReference>
<dbReference type="FunFam" id="1.20.900.10:FF:000014">
    <property type="entry name" value="active breakpoint cluster region-related protein isoform X2"/>
    <property type="match status" value="1"/>
</dbReference>
<dbReference type="FunFam" id="1.10.555.10:FF:000004">
    <property type="entry name" value="active breakpoint cluster region-related protein-like"/>
    <property type="match status" value="1"/>
</dbReference>
<dbReference type="Gene3D" id="4.10.280.30">
    <property type="entry name" value="Bcr-Abl oncoprotein oligomerisation domain"/>
    <property type="match status" value="1"/>
</dbReference>
<dbReference type="Gene3D" id="2.60.40.150">
    <property type="entry name" value="C2 domain"/>
    <property type="match status" value="1"/>
</dbReference>
<dbReference type="Gene3D" id="1.20.900.10">
    <property type="entry name" value="Dbl homology (DH) domain"/>
    <property type="match status" value="1"/>
</dbReference>
<dbReference type="Gene3D" id="2.30.29.30">
    <property type="entry name" value="Pleckstrin-homology domain (PH domain)/Phosphotyrosine-binding domain (PTB)"/>
    <property type="match status" value="1"/>
</dbReference>
<dbReference type="Gene3D" id="1.10.555.10">
    <property type="entry name" value="Rho GTPase activation protein"/>
    <property type="match status" value="1"/>
</dbReference>
<dbReference type="InterPro" id="IPR037769">
    <property type="entry name" value="Abr/Bcr"/>
</dbReference>
<dbReference type="InterPro" id="IPR015123">
    <property type="entry name" value="Bcr-Abl_oncoprot_oligo"/>
</dbReference>
<dbReference type="InterPro" id="IPR036481">
    <property type="entry name" value="Bcr-Abl_oncoprot_oligo_sf"/>
</dbReference>
<dbReference type="InterPro" id="IPR000008">
    <property type="entry name" value="C2_dom"/>
</dbReference>
<dbReference type="InterPro" id="IPR035892">
    <property type="entry name" value="C2_domain_sf"/>
</dbReference>
<dbReference type="InterPro" id="IPR035899">
    <property type="entry name" value="DBL_dom_sf"/>
</dbReference>
<dbReference type="InterPro" id="IPR000219">
    <property type="entry name" value="DH_dom"/>
</dbReference>
<dbReference type="InterPro" id="IPR001331">
    <property type="entry name" value="GDS_CDC24_CS"/>
</dbReference>
<dbReference type="InterPro" id="IPR011993">
    <property type="entry name" value="PH-like_dom_sf"/>
</dbReference>
<dbReference type="InterPro" id="IPR001849">
    <property type="entry name" value="PH_domain"/>
</dbReference>
<dbReference type="InterPro" id="IPR008936">
    <property type="entry name" value="Rho_GTPase_activation_prot"/>
</dbReference>
<dbReference type="InterPro" id="IPR000198">
    <property type="entry name" value="RhoGAP_dom"/>
</dbReference>
<dbReference type="PANTHER" id="PTHR23182:SF3">
    <property type="entry name" value="BREAKPOINT CLUSTER REGION PROTEIN"/>
    <property type="match status" value="1"/>
</dbReference>
<dbReference type="PANTHER" id="PTHR23182">
    <property type="entry name" value="BREAKPOINT CLUSTER REGION PROTEIN BCR"/>
    <property type="match status" value="1"/>
</dbReference>
<dbReference type="Pfam" id="PF09036">
    <property type="entry name" value="Bcr-Abl_Oligo"/>
    <property type="match status" value="1"/>
</dbReference>
<dbReference type="Pfam" id="PF00168">
    <property type="entry name" value="C2"/>
    <property type="match status" value="1"/>
</dbReference>
<dbReference type="Pfam" id="PF19057">
    <property type="entry name" value="PH_19"/>
    <property type="match status" value="1"/>
</dbReference>
<dbReference type="Pfam" id="PF00620">
    <property type="entry name" value="RhoGAP"/>
    <property type="match status" value="1"/>
</dbReference>
<dbReference type="Pfam" id="PF00621">
    <property type="entry name" value="RhoGEF"/>
    <property type="match status" value="1"/>
</dbReference>
<dbReference type="SMART" id="SM00239">
    <property type="entry name" value="C2"/>
    <property type="match status" value="1"/>
</dbReference>
<dbReference type="SMART" id="SM00233">
    <property type="entry name" value="PH"/>
    <property type="match status" value="1"/>
</dbReference>
<dbReference type="SMART" id="SM00324">
    <property type="entry name" value="RhoGAP"/>
    <property type="match status" value="1"/>
</dbReference>
<dbReference type="SMART" id="SM00325">
    <property type="entry name" value="RhoGEF"/>
    <property type="match status" value="1"/>
</dbReference>
<dbReference type="SUPFAM" id="SSF69036">
    <property type="entry name" value="Bcr-Abl oncoprotein oligomerization domain"/>
    <property type="match status" value="1"/>
</dbReference>
<dbReference type="SUPFAM" id="SSF49562">
    <property type="entry name" value="C2 domain (Calcium/lipid-binding domain, CaLB)"/>
    <property type="match status" value="1"/>
</dbReference>
<dbReference type="SUPFAM" id="SSF48065">
    <property type="entry name" value="DBL homology domain (DH-domain)"/>
    <property type="match status" value="1"/>
</dbReference>
<dbReference type="SUPFAM" id="SSF48350">
    <property type="entry name" value="GTPase activation domain, GAP"/>
    <property type="match status" value="1"/>
</dbReference>
<dbReference type="SUPFAM" id="SSF50729">
    <property type="entry name" value="PH domain-like"/>
    <property type="match status" value="1"/>
</dbReference>
<dbReference type="PROSITE" id="PS50004">
    <property type="entry name" value="C2"/>
    <property type="match status" value="1"/>
</dbReference>
<dbReference type="PROSITE" id="PS00741">
    <property type="entry name" value="DH_1"/>
    <property type="match status" value="1"/>
</dbReference>
<dbReference type="PROSITE" id="PS50010">
    <property type="entry name" value="DH_2"/>
    <property type="match status" value="1"/>
</dbReference>
<dbReference type="PROSITE" id="PS50003">
    <property type="entry name" value="PH_DOMAIN"/>
    <property type="match status" value="1"/>
</dbReference>
<dbReference type="PROSITE" id="PS50238">
    <property type="entry name" value="RHOGAP"/>
    <property type="match status" value="1"/>
</dbReference>